<comment type="function">
    <text evidence="1">Trans-acting protein required for termination of DNA replication. Binds to DNA replication terminator sequences (terA to terF) to prevent the passage of replication forks. The termination efficiency will be affected by the affinity of this protein for the terminator sequence.</text>
</comment>
<comment type="subcellular location">
    <subcellularLocation>
        <location evidence="1">Cytoplasm</location>
    </subcellularLocation>
</comment>
<comment type="similarity">
    <text evidence="1">Belongs to the Tus family.</text>
</comment>
<dbReference type="EMBL" id="CP001063">
    <property type="protein sequence ID" value="ACD10472.1"/>
    <property type="molecule type" value="Genomic_DNA"/>
</dbReference>
<dbReference type="RefSeq" id="WP_012421691.1">
    <property type="nucleotide sequence ID" value="NC_010658.1"/>
</dbReference>
<dbReference type="SMR" id="B2U1R9"/>
<dbReference type="STRING" id="344609.SbBS512_E1797"/>
<dbReference type="KEGG" id="sbc:SbBS512_E1797"/>
<dbReference type="HOGENOM" id="CLU_078181_0_0_6"/>
<dbReference type="Proteomes" id="UP000001030">
    <property type="component" value="Chromosome"/>
</dbReference>
<dbReference type="GO" id="GO:0005737">
    <property type="term" value="C:cytoplasm"/>
    <property type="evidence" value="ECO:0007669"/>
    <property type="project" value="UniProtKB-SubCell"/>
</dbReference>
<dbReference type="GO" id="GO:0003677">
    <property type="term" value="F:DNA binding"/>
    <property type="evidence" value="ECO:0007669"/>
    <property type="project" value="UniProtKB-UniRule"/>
</dbReference>
<dbReference type="GO" id="GO:0006274">
    <property type="term" value="P:DNA replication termination"/>
    <property type="evidence" value="ECO:0007669"/>
    <property type="project" value="UniProtKB-UniRule"/>
</dbReference>
<dbReference type="Gene3D" id="3.30.54.10">
    <property type="match status" value="1"/>
</dbReference>
<dbReference type="Gene3D" id="3.50.14.10">
    <property type="entry name" value="Replication terminator Tus, domain 1 superfamily/Replication terminator Tus"/>
    <property type="match status" value="1"/>
</dbReference>
<dbReference type="HAMAP" id="MF_00483">
    <property type="entry name" value="Rep_term_Tus"/>
    <property type="match status" value="1"/>
</dbReference>
<dbReference type="InterPro" id="IPR008865">
    <property type="entry name" value="DNA_replication_term_site-bd"/>
</dbReference>
<dbReference type="InterPro" id="IPR036381">
    <property type="entry name" value="Tus_dom1"/>
</dbReference>
<dbReference type="InterPro" id="IPR036384">
    <property type="entry name" value="Tus_sf"/>
</dbReference>
<dbReference type="NCBIfam" id="TIGR02648">
    <property type="entry name" value="rep_term_tus"/>
    <property type="match status" value="1"/>
</dbReference>
<dbReference type="Pfam" id="PF05472">
    <property type="entry name" value="Ter"/>
    <property type="match status" value="1"/>
</dbReference>
<dbReference type="SUPFAM" id="SSF56596">
    <property type="entry name" value="Replication terminator protein (Tus)"/>
    <property type="match status" value="1"/>
</dbReference>
<gene>
    <name evidence="1" type="primary">tus</name>
    <name type="ordered locus">SbBS512_E1797</name>
</gene>
<sequence>MARYDLVDRLNTTFRQMEQELAAFAAHLEQHKLLVARVFSLPEVKKEDEHNPLNRIEVKQHLGNDAQSLALRHFRHLFIQQQSENRSSKAAVRLPGVLCYQVNNLSQAALVSHIQHINKLKTTFEHIVTVESELPTAARFEWVHRHLPGLITLNAYRSLTVLHDPATLRFGWANKHIIKNLHRDEVLAQLEKSLKSPRSVAPWTREEWQRKLEREYQDIAALPQNAKLKIKRPVKVQPIARVWYKGDQKQVQHACPTPLIALINRDNGAGVPDVGELLNYDADNVQHRYKPQAQPLRLIIPRLHLYVAD</sequence>
<name>TUS_SHIB3</name>
<protein>
    <recommendedName>
        <fullName evidence="1">DNA replication terminus site-binding protein</fullName>
        <shortName evidence="1">Ter-binding protein</shortName>
    </recommendedName>
</protein>
<reference key="1">
    <citation type="submission" date="2008-05" db="EMBL/GenBank/DDBJ databases">
        <title>Complete sequence of Shigella boydii serotype 18 strain BS512.</title>
        <authorList>
            <person name="Rasko D.A."/>
            <person name="Rosovitz M."/>
            <person name="Maurelli A.T."/>
            <person name="Myers G."/>
            <person name="Seshadri R."/>
            <person name="Cer R."/>
            <person name="Jiang L."/>
            <person name="Ravel J."/>
            <person name="Sebastian Y."/>
        </authorList>
    </citation>
    <scope>NUCLEOTIDE SEQUENCE [LARGE SCALE GENOMIC DNA]</scope>
    <source>
        <strain>CDC 3083-94 / BS512</strain>
    </source>
</reference>
<keyword id="KW-0963">Cytoplasm</keyword>
<keyword id="KW-0235">DNA replication</keyword>
<keyword id="KW-0238">DNA-binding</keyword>
<keyword id="KW-1185">Reference proteome</keyword>
<evidence type="ECO:0000255" key="1">
    <source>
        <dbReference type="HAMAP-Rule" id="MF_00483"/>
    </source>
</evidence>
<accession>B2U1R9</accession>
<organism>
    <name type="scientific">Shigella boydii serotype 18 (strain CDC 3083-94 / BS512)</name>
    <dbReference type="NCBI Taxonomy" id="344609"/>
    <lineage>
        <taxon>Bacteria</taxon>
        <taxon>Pseudomonadati</taxon>
        <taxon>Pseudomonadota</taxon>
        <taxon>Gammaproteobacteria</taxon>
        <taxon>Enterobacterales</taxon>
        <taxon>Enterobacteriaceae</taxon>
        <taxon>Shigella</taxon>
    </lineage>
</organism>
<feature type="chain" id="PRO_1000126050" description="DNA replication terminus site-binding protein">
    <location>
        <begin position="1"/>
        <end position="309"/>
    </location>
</feature>
<proteinExistence type="inferred from homology"/>